<evidence type="ECO:0000250" key="1"/>
<evidence type="ECO:0000255" key="2">
    <source>
        <dbReference type="PROSITE-ProRule" id="PRU00541"/>
    </source>
</evidence>
<evidence type="ECO:0000255" key="3">
    <source>
        <dbReference type="PROSITE-ProRule" id="PRU00542"/>
    </source>
</evidence>
<evidence type="ECO:0000256" key="4">
    <source>
        <dbReference type="SAM" id="MobiDB-lite"/>
    </source>
</evidence>
<evidence type="ECO:0000305" key="5"/>
<name>DBP3_MYCMD</name>
<proteinExistence type="inferred from homology"/>
<organism>
    <name type="scientific">Mycosarcoma maydis</name>
    <name type="common">Corn smut fungus</name>
    <name type="synonym">Ustilago maydis</name>
    <dbReference type="NCBI Taxonomy" id="5270"/>
    <lineage>
        <taxon>Eukaryota</taxon>
        <taxon>Fungi</taxon>
        <taxon>Dikarya</taxon>
        <taxon>Basidiomycota</taxon>
        <taxon>Ustilaginomycotina</taxon>
        <taxon>Ustilaginomycetes</taxon>
        <taxon>Ustilaginales</taxon>
        <taxon>Ustilaginaceae</taxon>
        <taxon>Mycosarcoma</taxon>
    </lineage>
</organism>
<keyword id="KW-0067">ATP-binding</keyword>
<keyword id="KW-0347">Helicase</keyword>
<keyword id="KW-0378">Hydrolase</keyword>
<keyword id="KW-0547">Nucleotide-binding</keyword>
<keyword id="KW-0539">Nucleus</keyword>
<keyword id="KW-1185">Reference proteome</keyword>
<keyword id="KW-0690">Ribosome biogenesis</keyword>
<keyword id="KW-0694">RNA-binding</keyword>
<keyword id="KW-0698">rRNA processing</keyword>
<sequence>MTTSATEKALEDRAKSLHKKEKKASAKAAAAAGASASTSLEGSPSPASPAKKDKKDKKDKKDKKRSADDADADDDEKAAKKRRKEEKKAKKAAAKSGAATSLESTPAASPAPAASSSASAASFTPTNPAAARAFVESHNITIEAPEESNERPPLPMVDFRELDGKVDAAVKKTLDSQGFSTPTPIQACCWPVLLQNKDVVGIAETGSGKTFAFGLPALQHLVTKHKVLDSGKKKAKGAQVNVLVIAPTRELAIQTEENMAKLGKSMGIGMICLYGGVSKQEQVRLLNQSPPVRIVVGTPGRVLDMARDGSLDLSGVTYLVLDEADRMLDKGFEPDIRAIIGMCKSREEGRHTSMFSATWPPAVRGLAESFMNGPVRVTVGSDELSANRRVEQTVEVLADGYAKERRLNDFLRSVNAQRSKDKILIFALYKKEAQRIEQTLRRGGFKVSGIHGDLGQNERIASLERFKSAETPLLVATDVAARGLDIPNVEHVVNYTFPLTIEDYVHRIGRTGRGGKTGKSLTFFTEMDKAHAGELIRVLKDADQKVPDALTKFPTTIKKKTHSSYGDHFKELVPGKAKKITFDDD</sequence>
<feature type="chain" id="PRO_0000232182" description="ATP-dependent RNA helicase DBP3">
    <location>
        <begin position="1"/>
        <end position="585"/>
    </location>
</feature>
<feature type="domain" description="Helicase ATP-binding" evidence="2">
    <location>
        <begin position="190"/>
        <end position="377"/>
    </location>
</feature>
<feature type="domain" description="Helicase C-terminal" evidence="3">
    <location>
        <begin position="406"/>
        <end position="554"/>
    </location>
</feature>
<feature type="region of interest" description="Disordered" evidence="4">
    <location>
        <begin position="1"/>
        <end position="124"/>
    </location>
</feature>
<feature type="short sequence motif" description="Q motif">
    <location>
        <begin position="159"/>
        <end position="187"/>
    </location>
</feature>
<feature type="short sequence motif" description="DEAD box">
    <location>
        <begin position="322"/>
        <end position="325"/>
    </location>
</feature>
<feature type="compositionally biased region" description="Low complexity" evidence="4">
    <location>
        <begin position="26"/>
        <end position="43"/>
    </location>
</feature>
<feature type="compositionally biased region" description="Basic residues" evidence="4">
    <location>
        <begin position="52"/>
        <end position="64"/>
    </location>
</feature>
<feature type="compositionally biased region" description="Basic residues" evidence="4">
    <location>
        <begin position="79"/>
        <end position="93"/>
    </location>
</feature>
<feature type="compositionally biased region" description="Low complexity" evidence="4">
    <location>
        <begin position="94"/>
        <end position="124"/>
    </location>
</feature>
<feature type="binding site" evidence="2">
    <location>
        <begin position="203"/>
        <end position="210"/>
    </location>
    <ligand>
        <name>ATP</name>
        <dbReference type="ChEBI" id="CHEBI:30616"/>
    </ligand>
</feature>
<accession>Q4PDT1</accession>
<accession>A0A0D1E3B5</accession>
<gene>
    <name type="primary">DBP3</name>
    <name type="ORF">UMAG_01732</name>
</gene>
<comment type="function">
    <text evidence="1">ATP-dependent RNA helicase required for 60S ribosomal subunit synthesis. Involved in efficient pre-rRNA processing, predominantly at site A3, which is necessary for the normal formation of 25S and 5.8S rRNAs (By similarity).</text>
</comment>
<comment type="catalytic activity">
    <reaction>
        <text>ATP + H2O = ADP + phosphate + H(+)</text>
        <dbReference type="Rhea" id="RHEA:13065"/>
        <dbReference type="ChEBI" id="CHEBI:15377"/>
        <dbReference type="ChEBI" id="CHEBI:15378"/>
        <dbReference type="ChEBI" id="CHEBI:30616"/>
        <dbReference type="ChEBI" id="CHEBI:43474"/>
        <dbReference type="ChEBI" id="CHEBI:456216"/>
        <dbReference type="EC" id="3.6.4.13"/>
    </reaction>
</comment>
<comment type="subcellular location">
    <subcellularLocation>
        <location evidence="1">Nucleus</location>
        <location evidence="1">Nucleolus</location>
    </subcellularLocation>
</comment>
<comment type="domain">
    <text>The Q motif is unique to and characteristic of the DEAD box family of RNA helicases and controls ATP binding and hydrolysis.</text>
</comment>
<comment type="similarity">
    <text evidence="5">Belongs to the DEAD box helicase family. DDX5/DBP2 subfamily.</text>
</comment>
<protein>
    <recommendedName>
        <fullName>ATP-dependent RNA helicase DBP3</fullName>
        <ecNumber>3.6.4.13</ecNumber>
    </recommendedName>
</protein>
<reference key="1">
    <citation type="journal article" date="2006" name="Nature">
        <title>Insights from the genome of the biotrophic fungal plant pathogen Ustilago maydis.</title>
        <authorList>
            <person name="Kaemper J."/>
            <person name="Kahmann R."/>
            <person name="Boelker M."/>
            <person name="Ma L.-J."/>
            <person name="Brefort T."/>
            <person name="Saville B.J."/>
            <person name="Banuett F."/>
            <person name="Kronstad J.W."/>
            <person name="Gold S.E."/>
            <person name="Mueller O."/>
            <person name="Perlin M.H."/>
            <person name="Woesten H.A.B."/>
            <person name="de Vries R."/>
            <person name="Ruiz-Herrera J."/>
            <person name="Reynaga-Pena C.G."/>
            <person name="Snetselaar K."/>
            <person name="McCann M."/>
            <person name="Perez-Martin J."/>
            <person name="Feldbruegge M."/>
            <person name="Basse C.W."/>
            <person name="Steinberg G."/>
            <person name="Ibeas J.I."/>
            <person name="Holloman W."/>
            <person name="Guzman P."/>
            <person name="Farman M.L."/>
            <person name="Stajich J.E."/>
            <person name="Sentandreu R."/>
            <person name="Gonzalez-Prieto J.M."/>
            <person name="Kennell J.C."/>
            <person name="Molina L."/>
            <person name="Schirawski J."/>
            <person name="Mendoza-Mendoza A."/>
            <person name="Greilinger D."/>
            <person name="Muench K."/>
            <person name="Roessel N."/>
            <person name="Scherer M."/>
            <person name="Vranes M."/>
            <person name="Ladendorf O."/>
            <person name="Vincon V."/>
            <person name="Fuchs U."/>
            <person name="Sandrock B."/>
            <person name="Meng S."/>
            <person name="Ho E.C.H."/>
            <person name="Cahill M.J."/>
            <person name="Boyce K.J."/>
            <person name="Klose J."/>
            <person name="Klosterman S.J."/>
            <person name="Deelstra H.J."/>
            <person name="Ortiz-Castellanos L."/>
            <person name="Li W."/>
            <person name="Sanchez-Alonso P."/>
            <person name="Schreier P.H."/>
            <person name="Haeuser-Hahn I."/>
            <person name="Vaupel M."/>
            <person name="Koopmann E."/>
            <person name="Friedrich G."/>
            <person name="Voss H."/>
            <person name="Schlueter T."/>
            <person name="Margolis J."/>
            <person name="Platt D."/>
            <person name="Swimmer C."/>
            <person name="Gnirke A."/>
            <person name="Chen F."/>
            <person name="Vysotskaia V."/>
            <person name="Mannhaupt G."/>
            <person name="Gueldener U."/>
            <person name="Muensterkoetter M."/>
            <person name="Haase D."/>
            <person name="Oesterheld M."/>
            <person name="Mewes H.-W."/>
            <person name="Mauceli E.W."/>
            <person name="DeCaprio D."/>
            <person name="Wade C.M."/>
            <person name="Butler J."/>
            <person name="Young S.K."/>
            <person name="Jaffe D.B."/>
            <person name="Calvo S.E."/>
            <person name="Nusbaum C."/>
            <person name="Galagan J.E."/>
            <person name="Birren B.W."/>
        </authorList>
    </citation>
    <scope>NUCLEOTIDE SEQUENCE [LARGE SCALE GENOMIC DNA]</scope>
    <source>
        <strain>DSM 14603 / FGSC 9021 / UM521</strain>
    </source>
</reference>
<reference key="2">
    <citation type="submission" date="2014-09" db="EMBL/GenBank/DDBJ databases">
        <authorList>
            <person name="Gueldener U."/>
            <person name="Muensterkoetter M."/>
            <person name="Walter M.C."/>
            <person name="Mannhaupt G."/>
            <person name="Kahmann R."/>
        </authorList>
    </citation>
    <scope>GENOME REANNOTATION</scope>
    <source>
        <strain>DSM 14603 / FGSC 9021 / UM521</strain>
    </source>
</reference>
<dbReference type="EC" id="3.6.4.13"/>
<dbReference type="EMBL" id="CM003142">
    <property type="protein sequence ID" value="KIS70564.1"/>
    <property type="molecule type" value="Genomic_DNA"/>
</dbReference>
<dbReference type="RefSeq" id="XP_011387703.1">
    <property type="nucleotide sequence ID" value="XM_011389401.1"/>
</dbReference>
<dbReference type="SMR" id="Q4PDT1"/>
<dbReference type="FunCoup" id="Q4PDT1">
    <property type="interactions" value="178"/>
</dbReference>
<dbReference type="STRING" id="237631.Q4PDT1"/>
<dbReference type="EnsemblFungi" id="KIS70564">
    <property type="protein sequence ID" value="KIS70564"/>
    <property type="gene ID" value="UMAG_01732"/>
</dbReference>
<dbReference type="GeneID" id="23562649"/>
<dbReference type="KEGG" id="uma:UMAG_01732"/>
<dbReference type="VEuPathDB" id="FungiDB:UMAG_01732"/>
<dbReference type="eggNOG" id="KOG0331">
    <property type="taxonomic scope" value="Eukaryota"/>
</dbReference>
<dbReference type="HOGENOM" id="CLU_003041_1_5_1"/>
<dbReference type="InParanoid" id="Q4PDT1"/>
<dbReference type="OMA" id="KKTHDMY"/>
<dbReference type="OrthoDB" id="196131at2759"/>
<dbReference type="Proteomes" id="UP000000561">
    <property type="component" value="Chromosome 3"/>
</dbReference>
<dbReference type="GO" id="GO:0005730">
    <property type="term" value="C:nucleolus"/>
    <property type="evidence" value="ECO:0000318"/>
    <property type="project" value="GO_Central"/>
</dbReference>
<dbReference type="GO" id="GO:0030687">
    <property type="term" value="C:preribosome, large subunit precursor"/>
    <property type="evidence" value="ECO:0007669"/>
    <property type="project" value="EnsemblFungi"/>
</dbReference>
<dbReference type="GO" id="GO:0005524">
    <property type="term" value="F:ATP binding"/>
    <property type="evidence" value="ECO:0007669"/>
    <property type="project" value="UniProtKB-KW"/>
</dbReference>
<dbReference type="GO" id="GO:0016887">
    <property type="term" value="F:ATP hydrolysis activity"/>
    <property type="evidence" value="ECO:0007669"/>
    <property type="project" value="RHEA"/>
</dbReference>
<dbReference type="GO" id="GO:0003729">
    <property type="term" value="F:mRNA binding"/>
    <property type="evidence" value="ECO:0000318"/>
    <property type="project" value="GO_Central"/>
</dbReference>
<dbReference type="GO" id="GO:0003724">
    <property type="term" value="F:RNA helicase activity"/>
    <property type="evidence" value="ECO:0000318"/>
    <property type="project" value="GO_Central"/>
</dbReference>
<dbReference type="GO" id="GO:0000464">
    <property type="term" value="P:endonucleolytic cleavage in ITS1 upstream of 5.8S rRNA from tricistronic rRNA transcript (SSU-rRNA, 5.8S rRNA, LSU-rRNA)"/>
    <property type="evidence" value="ECO:0007669"/>
    <property type="project" value="EnsemblFungi"/>
</dbReference>
<dbReference type="GO" id="GO:0006364">
    <property type="term" value="P:rRNA processing"/>
    <property type="evidence" value="ECO:0000318"/>
    <property type="project" value="GO_Central"/>
</dbReference>
<dbReference type="CDD" id="cd00268">
    <property type="entry name" value="DEADc"/>
    <property type="match status" value="1"/>
</dbReference>
<dbReference type="CDD" id="cd18787">
    <property type="entry name" value="SF2_C_DEAD"/>
    <property type="match status" value="1"/>
</dbReference>
<dbReference type="FunFam" id="3.40.50.300:FF:000008">
    <property type="entry name" value="ATP-dependent RNA helicase RhlB"/>
    <property type="match status" value="1"/>
</dbReference>
<dbReference type="Gene3D" id="3.40.50.300">
    <property type="entry name" value="P-loop containing nucleotide triphosphate hydrolases"/>
    <property type="match status" value="2"/>
</dbReference>
<dbReference type="InterPro" id="IPR011545">
    <property type="entry name" value="DEAD/DEAH_box_helicase_dom"/>
</dbReference>
<dbReference type="InterPro" id="IPR014001">
    <property type="entry name" value="Helicase_ATP-bd"/>
</dbReference>
<dbReference type="InterPro" id="IPR001650">
    <property type="entry name" value="Helicase_C-like"/>
</dbReference>
<dbReference type="InterPro" id="IPR027417">
    <property type="entry name" value="P-loop_NTPase"/>
</dbReference>
<dbReference type="InterPro" id="IPR000629">
    <property type="entry name" value="RNA-helicase_DEAD-box_CS"/>
</dbReference>
<dbReference type="PANTHER" id="PTHR47958">
    <property type="entry name" value="ATP-DEPENDENT RNA HELICASE DBP3"/>
    <property type="match status" value="1"/>
</dbReference>
<dbReference type="Pfam" id="PF00270">
    <property type="entry name" value="DEAD"/>
    <property type="match status" value="1"/>
</dbReference>
<dbReference type="Pfam" id="PF00271">
    <property type="entry name" value="Helicase_C"/>
    <property type="match status" value="1"/>
</dbReference>
<dbReference type="SMART" id="SM00487">
    <property type="entry name" value="DEXDc"/>
    <property type="match status" value="1"/>
</dbReference>
<dbReference type="SMART" id="SM00490">
    <property type="entry name" value="HELICc"/>
    <property type="match status" value="1"/>
</dbReference>
<dbReference type="SUPFAM" id="SSF52540">
    <property type="entry name" value="P-loop containing nucleoside triphosphate hydrolases"/>
    <property type="match status" value="1"/>
</dbReference>
<dbReference type="PROSITE" id="PS00039">
    <property type="entry name" value="DEAD_ATP_HELICASE"/>
    <property type="match status" value="1"/>
</dbReference>
<dbReference type="PROSITE" id="PS51192">
    <property type="entry name" value="HELICASE_ATP_BIND_1"/>
    <property type="match status" value="1"/>
</dbReference>
<dbReference type="PROSITE" id="PS51194">
    <property type="entry name" value="HELICASE_CTER"/>
    <property type="match status" value="1"/>
</dbReference>
<dbReference type="PROSITE" id="PS51195">
    <property type="entry name" value="Q_MOTIF"/>
    <property type="match status" value="1"/>
</dbReference>